<reference key="1">
    <citation type="journal article" date="2008" name="J. Biotechnol.">
        <title>The lifestyle of Corynebacterium urealyticum derived from its complete genome sequence established by pyrosequencing.</title>
        <authorList>
            <person name="Tauch A."/>
            <person name="Trost E."/>
            <person name="Tilker A."/>
            <person name="Ludewig U."/>
            <person name="Schneiker S."/>
            <person name="Goesmann A."/>
            <person name="Arnold W."/>
            <person name="Bekel T."/>
            <person name="Brinkrolf K."/>
            <person name="Brune I."/>
            <person name="Goetker S."/>
            <person name="Kalinowski J."/>
            <person name="Kamp P.-B."/>
            <person name="Lobo F.P."/>
            <person name="Viehoever P."/>
            <person name="Weisshaar B."/>
            <person name="Soriano F."/>
            <person name="Droege M."/>
            <person name="Puehler A."/>
        </authorList>
    </citation>
    <scope>NUCLEOTIDE SEQUENCE [LARGE SCALE GENOMIC DNA]</scope>
    <source>
        <strain>ATCC 43042 / DSM 7109</strain>
    </source>
</reference>
<proteinExistence type="inferred from homology"/>
<organism>
    <name type="scientific">Corynebacterium urealyticum (strain ATCC 43042 / DSM 7109)</name>
    <dbReference type="NCBI Taxonomy" id="504474"/>
    <lineage>
        <taxon>Bacteria</taxon>
        <taxon>Bacillati</taxon>
        <taxon>Actinomycetota</taxon>
        <taxon>Actinomycetes</taxon>
        <taxon>Mycobacteriales</taxon>
        <taxon>Corynebacteriaceae</taxon>
        <taxon>Corynebacterium</taxon>
    </lineage>
</organism>
<protein>
    <recommendedName>
        <fullName evidence="1">Large ribosomal subunit protein bL20</fullName>
    </recommendedName>
    <alternativeName>
        <fullName evidence="2">50S ribosomal protein L20</fullName>
    </alternativeName>
</protein>
<sequence>MARVKRSVNAKKKRREVLNSAKGYRGQRSRLYRKAKEQMLHSKTYAFRDRRARKGEFRKLWIQRINAAARQNDMTYNRLIQGLKLAEIEVDRKVLAELAVSDAAAFTALCEAAKAALPEDVNAPAAS</sequence>
<evidence type="ECO:0000255" key="1">
    <source>
        <dbReference type="HAMAP-Rule" id="MF_00382"/>
    </source>
</evidence>
<evidence type="ECO:0000305" key="2"/>
<gene>
    <name evidence="1" type="primary">rplT</name>
    <name type="ordered locus">cu1121</name>
</gene>
<accession>B1VH40</accession>
<comment type="function">
    <text evidence="1">Binds directly to 23S ribosomal RNA and is necessary for the in vitro assembly process of the 50S ribosomal subunit. It is not involved in the protein synthesizing functions of that subunit.</text>
</comment>
<comment type="similarity">
    <text evidence="1">Belongs to the bacterial ribosomal protein bL20 family.</text>
</comment>
<feature type="chain" id="PRO_1000122298" description="Large ribosomal subunit protein bL20">
    <location>
        <begin position="1"/>
        <end position="127"/>
    </location>
</feature>
<name>RL20_CORU7</name>
<dbReference type="EMBL" id="AM942444">
    <property type="protein sequence ID" value="CAQ05081.1"/>
    <property type="molecule type" value="Genomic_DNA"/>
</dbReference>
<dbReference type="RefSeq" id="WP_012360369.1">
    <property type="nucleotide sequence ID" value="NC_010545.1"/>
</dbReference>
<dbReference type="SMR" id="B1VH40"/>
<dbReference type="STRING" id="504474.cu1121"/>
<dbReference type="GeneID" id="60603902"/>
<dbReference type="KEGG" id="cur:cu1121"/>
<dbReference type="eggNOG" id="COG0292">
    <property type="taxonomic scope" value="Bacteria"/>
</dbReference>
<dbReference type="HOGENOM" id="CLU_123265_0_0_11"/>
<dbReference type="Proteomes" id="UP000001727">
    <property type="component" value="Chromosome"/>
</dbReference>
<dbReference type="GO" id="GO:1990904">
    <property type="term" value="C:ribonucleoprotein complex"/>
    <property type="evidence" value="ECO:0007669"/>
    <property type="project" value="UniProtKB-KW"/>
</dbReference>
<dbReference type="GO" id="GO:0005840">
    <property type="term" value="C:ribosome"/>
    <property type="evidence" value="ECO:0007669"/>
    <property type="project" value="UniProtKB-KW"/>
</dbReference>
<dbReference type="GO" id="GO:0019843">
    <property type="term" value="F:rRNA binding"/>
    <property type="evidence" value="ECO:0007669"/>
    <property type="project" value="UniProtKB-UniRule"/>
</dbReference>
<dbReference type="GO" id="GO:0003735">
    <property type="term" value="F:structural constituent of ribosome"/>
    <property type="evidence" value="ECO:0007669"/>
    <property type="project" value="InterPro"/>
</dbReference>
<dbReference type="GO" id="GO:0000027">
    <property type="term" value="P:ribosomal large subunit assembly"/>
    <property type="evidence" value="ECO:0007669"/>
    <property type="project" value="UniProtKB-UniRule"/>
</dbReference>
<dbReference type="GO" id="GO:0006412">
    <property type="term" value="P:translation"/>
    <property type="evidence" value="ECO:0007669"/>
    <property type="project" value="InterPro"/>
</dbReference>
<dbReference type="CDD" id="cd07026">
    <property type="entry name" value="Ribosomal_L20"/>
    <property type="match status" value="1"/>
</dbReference>
<dbReference type="FunFam" id="1.10.1900.20:FF:000001">
    <property type="entry name" value="50S ribosomal protein L20"/>
    <property type="match status" value="1"/>
</dbReference>
<dbReference type="Gene3D" id="6.10.160.10">
    <property type="match status" value="1"/>
</dbReference>
<dbReference type="Gene3D" id="1.10.1900.20">
    <property type="entry name" value="Ribosomal protein L20"/>
    <property type="match status" value="1"/>
</dbReference>
<dbReference type="HAMAP" id="MF_00382">
    <property type="entry name" value="Ribosomal_bL20"/>
    <property type="match status" value="1"/>
</dbReference>
<dbReference type="InterPro" id="IPR005813">
    <property type="entry name" value="Ribosomal_bL20"/>
</dbReference>
<dbReference type="InterPro" id="IPR049946">
    <property type="entry name" value="RIBOSOMAL_L20_CS"/>
</dbReference>
<dbReference type="InterPro" id="IPR035566">
    <property type="entry name" value="Ribosomal_protein_bL20_C"/>
</dbReference>
<dbReference type="NCBIfam" id="TIGR01032">
    <property type="entry name" value="rplT_bact"/>
    <property type="match status" value="1"/>
</dbReference>
<dbReference type="PANTHER" id="PTHR10986">
    <property type="entry name" value="39S RIBOSOMAL PROTEIN L20"/>
    <property type="match status" value="1"/>
</dbReference>
<dbReference type="Pfam" id="PF00453">
    <property type="entry name" value="Ribosomal_L20"/>
    <property type="match status" value="1"/>
</dbReference>
<dbReference type="PRINTS" id="PR00062">
    <property type="entry name" value="RIBOSOMALL20"/>
</dbReference>
<dbReference type="SUPFAM" id="SSF74731">
    <property type="entry name" value="Ribosomal protein L20"/>
    <property type="match status" value="1"/>
</dbReference>
<dbReference type="PROSITE" id="PS00937">
    <property type="entry name" value="RIBOSOMAL_L20"/>
    <property type="match status" value="1"/>
</dbReference>
<keyword id="KW-1185">Reference proteome</keyword>
<keyword id="KW-0687">Ribonucleoprotein</keyword>
<keyword id="KW-0689">Ribosomal protein</keyword>
<keyword id="KW-0694">RNA-binding</keyword>
<keyword id="KW-0699">rRNA-binding</keyword>